<evidence type="ECO:0000250" key="1"/>
<evidence type="ECO:0000255" key="2">
    <source>
        <dbReference type="HAMAP-Rule" id="MF_00480"/>
    </source>
</evidence>
<evidence type="ECO:0000305" key="3"/>
<reference key="1">
    <citation type="submission" date="2007-03" db="EMBL/GenBank/DDBJ databases">
        <title>Sequencing analysis of Aethionema coridifolium chloroplast DNA.</title>
        <authorList>
            <person name="Hosouchi T."/>
            <person name="Tsuruoka H."/>
            <person name="Kotani H."/>
        </authorList>
    </citation>
    <scope>NUCLEOTIDE SEQUENCE [LARGE SCALE GENOMIC DNA]</scope>
</reference>
<comment type="function">
    <text evidence="1">One of the primary rRNA binding proteins, it binds directly to 16S rRNA where it nucleates assembly of the head domain of the 30S subunit.</text>
</comment>
<comment type="subunit">
    <text evidence="1">Part of the 30S ribosomal subunit.</text>
</comment>
<comment type="subcellular location">
    <subcellularLocation>
        <location>Plastid</location>
        <location>Chloroplast</location>
    </subcellularLocation>
</comment>
<comment type="similarity">
    <text evidence="3">Belongs to the universal ribosomal protein uS7 family.</text>
</comment>
<sequence>MSRRGTAEEKTAKSDPIYRNRLVNMLVNRILKHGKKSLAYQIIYRALKKIQQKTETNPLSVLRQAIRGVTPDIAVKARRVGGSTHQVPIEIGSTQGKALAIRWLLGASRKRPGRNMAFKLSSELVDAAKGSGDAIRKKEETHRMAEANRAFAHFR</sequence>
<feature type="chain" id="PRO_0000344321" description="Small ribosomal subunit protein uS7cz/uS7cy">
    <location>
        <begin position="1"/>
        <end position="155"/>
    </location>
</feature>
<proteinExistence type="inferred from homology"/>
<keyword id="KW-0150">Chloroplast</keyword>
<keyword id="KW-0934">Plastid</keyword>
<keyword id="KW-0687">Ribonucleoprotein</keyword>
<keyword id="KW-0689">Ribosomal protein</keyword>
<keyword id="KW-0694">RNA-binding</keyword>
<keyword id="KW-0699">rRNA-binding</keyword>
<geneLocation type="chloroplast"/>
<protein>
    <recommendedName>
        <fullName evidence="2">Small ribosomal subunit protein uS7cz/uS7cy</fullName>
    </recommendedName>
    <alternativeName>
        <fullName>30S ribosomal protein S7, chloroplastic</fullName>
    </alternativeName>
</protein>
<accession>A4QJG0</accession>
<gene>
    <name type="primary">rps7-A</name>
</gene>
<gene>
    <name type="primary">rps7-B</name>
</gene>
<name>RR7_AETCO</name>
<organism>
    <name type="scientific">Aethionema cordifolium</name>
    <name type="common">Lebanon stonecress</name>
    <dbReference type="NCBI Taxonomy" id="434059"/>
    <lineage>
        <taxon>Eukaryota</taxon>
        <taxon>Viridiplantae</taxon>
        <taxon>Streptophyta</taxon>
        <taxon>Embryophyta</taxon>
        <taxon>Tracheophyta</taxon>
        <taxon>Spermatophyta</taxon>
        <taxon>Magnoliopsida</taxon>
        <taxon>eudicotyledons</taxon>
        <taxon>Gunneridae</taxon>
        <taxon>Pentapetalae</taxon>
        <taxon>rosids</taxon>
        <taxon>malvids</taxon>
        <taxon>Brassicales</taxon>
        <taxon>Brassicaceae</taxon>
        <taxon>Aethionemeae</taxon>
        <taxon>Aethionema</taxon>
    </lineage>
</organism>
<dbReference type="EMBL" id="AP009366">
    <property type="protein sequence ID" value="BAF49815.1"/>
    <property type="molecule type" value="Genomic_DNA"/>
</dbReference>
<dbReference type="EMBL" id="AP009366">
    <property type="protein sequence ID" value="BAF49830.1"/>
    <property type="molecule type" value="Genomic_DNA"/>
</dbReference>
<dbReference type="SMR" id="A4QJG0"/>
<dbReference type="GO" id="GO:0009507">
    <property type="term" value="C:chloroplast"/>
    <property type="evidence" value="ECO:0007669"/>
    <property type="project" value="UniProtKB-SubCell"/>
</dbReference>
<dbReference type="GO" id="GO:0015935">
    <property type="term" value="C:small ribosomal subunit"/>
    <property type="evidence" value="ECO:0007669"/>
    <property type="project" value="InterPro"/>
</dbReference>
<dbReference type="GO" id="GO:0019843">
    <property type="term" value="F:rRNA binding"/>
    <property type="evidence" value="ECO:0007669"/>
    <property type="project" value="UniProtKB-UniRule"/>
</dbReference>
<dbReference type="GO" id="GO:0003735">
    <property type="term" value="F:structural constituent of ribosome"/>
    <property type="evidence" value="ECO:0007669"/>
    <property type="project" value="InterPro"/>
</dbReference>
<dbReference type="GO" id="GO:0006412">
    <property type="term" value="P:translation"/>
    <property type="evidence" value="ECO:0007669"/>
    <property type="project" value="UniProtKB-UniRule"/>
</dbReference>
<dbReference type="CDD" id="cd14871">
    <property type="entry name" value="uS7_Chloroplast"/>
    <property type="match status" value="1"/>
</dbReference>
<dbReference type="FunFam" id="1.10.455.10:FF:000001">
    <property type="entry name" value="30S ribosomal protein S7"/>
    <property type="match status" value="1"/>
</dbReference>
<dbReference type="Gene3D" id="1.10.455.10">
    <property type="entry name" value="Ribosomal protein S7 domain"/>
    <property type="match status" value="1"/>
</dbReference>
<dbReference type="HAMAP" id="MF_00480_B">
    <property type="entry name" value="Ribosomal_uS7_B"/>
    <property type="match status" value="1"/>
</dbReference>
<dbReference type="InterPro" id="IPR000235">
    <property type="entry name" value="Ribosomal_uS7"/>
</dbReference>
<dbReference type="InterPro" id="IPR005717">
    <property type="entry name" value="Ribosomal_uS7_bac/org-type"/>
</dbReference>
<dbReference type="InterPro" id="IPR020606">
    <property type="entry name" value="Ribosomal_uS7_CS"/>
</dbReference>
<dbReference type="InterPro" id="IPR023798">
    <property type="entry name" value="Ribosomal_uS7_dom"/>
</dbReference>
<dbReference type="InterPro" id="IPR036823">
    <property type="entry name" value="Ribosomal_uS7_dom_sf"/>
</dbReference>
<dbReference type="NCBIfam" id="TIGR01029">
    <property type="entry name" value="rpsG_bact"/>
    <property type="match status" value="1"/>
</dbReference>
<dbReference type="PANTHER" id="PTHR11205">
    <property type="entry name" value="RIBOSOMAL PROTEIN S7"/>
    <property type="match status" value="1"/>
</dbReference>
<dbReference type="Pfam" id="PF00177">
    <property type="entry name" value="Ribosomal_S7"/>
    <property type="match status" value="1"/>
</dbReference>
<dbReference type="PIRSF" id="PIRSF002122">
    <property type="entry name" value="RPS7p_RPS7a_RPS5e_RPS7o"/>
    <property type="match status" value="1"/>
</dbReference>
<dbReference type="SUPFAM" id="SSF47973">
    <property type="entry name" value="Ribosomal protein S7"/>
    <property type="match status" value="1"/>
</dbReference>
<dbReference type="PROSITE" id="PS00052">
    <property type="entry name" value="RIBOSOMAL_S7"/>
    <property type="match status" value="1"/>
</dbReference>